<protein>
    <recommendedName>
        <fullName evidence="3">Protein argonaute-2</fullName>
        <shortName evidence="3">Argonaute2</shortName>
        <ecNumber evidence="3">3.1.26.n2</ecNumber>
    </recommendedName>
    <alternativeName>
        <fullName>Argonaute RISC catalytic component 2</fullName>
    </alternativeName>
    <alternativeName>
        <fullName evidence="3">Eukaryotic translation initiation factor 2C 2</fullName>
        <shortName evidence="3">eIF-2C 2</shortName>
        <shortName evidence="3">eIF2C 2</shortName>
    </alternativeName>
    <alternativeName>
        <fullName evidence="3">Protein slicer</fullName>
    </alternativeName>
</protein>
<reference key="1">
    <citation type="submission" date="2004-07" db="EMBL/GenBank/DDBJ databases">
        <authorList>
            <consortium name="NIH - Xenopus Gene Collection (XGC) project"/>
        </authorList>
    </citation>
    <scope>NUCLEOTIDE SEQUENCE [LARGE SCALE MRNA]</scope>
    <source>
        <tissue>Embryo</tissue>
    </source>
</reference>
<sequence length="862" mass="97645">MYSGAGPVLVPPTTTPPLPMPAYTFKPPPRPDFGTSGRTIKLQANVFEMDIPKIEIYHYDIDIKPEKCPRRVNREIVEHMVQHFKAQIFGDRKPVFDGRKNLYTAMPLPIARDKQVELEVTLPGEGKDRIFKVAIKWMACVSLQALHDALSGRLPNVPFETVQALDVVMRHLPSMRYTPVGRSFFTASEGCANPLGGGREVWFGFHQSVRPSLWKMMLNIDVSATAFYKAQPVIEFMCEVLDFKSIEEQQKPLTDSQRVKFTKEIKGLKVEITHCGQMKRKYRVCNVTRRPASHQTFPLQQESGQTVECTVAQYFKDRHKLVLRYPHLPCLQVGQEQKHTYLPLEVCNIVAGQRCIKKLTDNQTSTMIRATARSAPDRQEEISKLMRSASFNTDPFVREFGIMVKDDMTDVTGRVLQPPSILYGGRSKAIATPVQGVWDMRNKQFHTGIEIKVWAIACFAPQRQCTEVHLKTFTEQLRKISRDAGMPIQGQPCFCKYAQGADSVEPMFRHLKNTYTGLQLVVVILPGKTPVYAEVKRVGDTVLGMATQCVQMKNVQRTTPQTLSNLCLKINVKLGGVNNILLPQGRPPVFQQPVIFLGADVTHPPAGDGKKPSIAAVVGSMDAHPNRYCATVRVQQHRQEIIQDLSAMVRELLIQFYKSTRFKPTRIIFYRDGVSEGQFQQVLHHELLAIREACIKLEKDYQPGITFIVVQKRHHTRLFCTDRNERVGKSGNIPAGTTVDTKITHPSEFDFYLCSHAGIQGTSRPSHYHVLWDDNRFSSDELQILTYQLCHTYVRCTRSVSIPAPAYYAHLVAFRARYHLVDKEHDSAEGSHTSGQSNGRDQQALAKAVQVHQDTLRTMYFA</sequence>
<name>AGO2_XENLA</name>
<proteinExistence type="evidence at transcript level"/>
<evidence type="ECO:0000250" key="1"/>
<evidence type="ECO:0000255" key="2"/>
<evidence type="ECO:0000255" key="3">
    <source>
        <dbReference type="HAMAP-Rule" id="MF_03031"/>
    </source>
</evidence>
<evidence type="ECO:0000255" key="4">
    <source>
        <dbReference type="PROSITE-ProRule" id="PRU00142"/>
    </source>
</evidence>
<evidence type="ECO:0000256" key="5">
    <source>
        <dbReference type="SAM" id="MobiDB-lite"/>
    </source>
</evidence>
<comment type="function">
    <text evidence="3">Required for RNA-mediated gene silencing (RNAi) by the RNA-induced silencing complex (RISC). The 'minimal RISC' appears to include ago2 bound to a short guide RNA such as a microRNA (miRNA) or short interfering RNA (siRNA). These guide RNAs direct RISC to complementary mRNAs that are targets for RISC-mediated gene silencing. The precise mechanism of gene silencing depends on the degree of complementarity between the miRNA or siRNA and its target. Binding of RISC to a perfectly complementary mRNA generally results in silencing due to endonucleolytic cleavage of the mRNA specifically by ago2. Binding of RISC to a partially complementary mRNA results in silencing through inhibition of translation, and this is independent of endonuclease activity. The inhibition of translational initiation leads to the accumulation of the affected mRNA in cytoplasmic processing bodies (P-bodies), where mRNA degradation may subsequently occur.</text>
</comment>
<comment type="catalytic activity">
    <reaction evidence="3">
        <text>Endonucleolytic cleavage to 5'-phosphomonoester.</text>
        <dbReference type="EC" id="3.1.26.n2"/>
    </reaction>
</comment>
<comment type="cofactor">
    <cofactor evidence="1">
        <name>Mg(2+)</name>
        <dbReference type="ChEBI" id="CHEBI:18420"/>
    </cofactor>
    <cofactor evidence="1">
        <name>Mn(2+)</name>
        <dbReference type="ChEBI" id="CHEBI:29035"/>
    </cofactor>
</comment>
<comment type="subunit">
    <text evidence="3">Component of the RISC loading complex (RLC), or micro-RNA (miRNA) loading complex (miRLC), which is composed of dicer1, ago2 and tarbp2. Note that the trimeric RLC/miRLC is also referred to as RISC.</text>
</comment>
<comment type="subcellular location">
    <subcellularLocation>
        <location evidence="3">Cytoplasm</location>
        <location evidence="3">P-body</location>
    </subcellularLocation>
</comment>
<comment type="domain">
    <text evidence="3">The Piwi domain may perform RNA cleavage by a mechanism similar to that of RNase H. However, while RNase H utilizes a triad of Asp-Asp-Glu (DDE) for metal ion coordination, this protein appears to utilize a triad of Asp-Asp-His (DDH).</text>
</comment>
<comment type="similarity">
    <text evidence="3">Belongs to the argonaute family. Ago subfamily.</text>
</comment>
<accession>Q6DCX2</accession>
<dbReference type="EC" id="3.1.26.n2" evidence="3"/>
<dbReference type="EMBL" id="BC077863">
    <property type="protein sequence ID" value="AAH77863.1"/>
    <property type="molecule type" value="mRNA"/>
</dbReference>
<dbReference type="RefSeq" id="NP_001086988.1">
    <property type="nucleotide sequence ID" value="NM_001093519.1"/>
</dbReference>
<dbReference type="SMR" id="Q6DCX2"/>
<dbReference type="DNASU" id="446823"/>
<dbReference type="GeneID" id="446823"/>
<dbReference type="KEGG" id="xla:446823"/>
<dbReference type="AGR" id="Xenbase:XB-GENE-1001922"/>
<dbReference type="CTD" id="446823"/>
<dbReference type="Xenbase" id="XB-GENE-1001922">
    <property type="gene designation" value="ago2.L"/>
</dbReference>
<dbReference type="OrthoDB" id="10252740at2759"/>
<dbReference type="Proteomes" id="UP000186698">
    <property type="component" value="Chromosome 6L"/>
</dbReference>
<dbReference type="Bgee" id="446823">
    <property type="expression patterns" value="Expressed in neurula embryo and 17 other cell types or tissues"/>
</dbReference>
<dbReference type="GO" id="GO:0005737">
    <property type="term" value="C:cytoplasm"/>
    <property type="evidence" value="ECO:0000318"/>
    <property type="project" value="GO_Central"/>
</dbReference>
<dbReference type="GO" id="GO:0036464">
    <property type="term" value="C:cytoplasmic ribonucleoprotein granule"/>
    <property type="evidence" value="ECO:0000318"/>
    <property type="project" value="GO_Central"/>
</dbReference>
<dbReference type="GO" id="GO:0005634">
    <property type="term" value="C:nucleus"/>
    <property type="evidence" value="ECO:0000318"/>
    <property type="project" value="GO_Central"/>
</dbReference>
<dbReference type="GO" id="GO:0000932">
    <property type="term" value="C:P-body"/>
    <property type="evidence" value="ECO:0007669"/>
    <property type="project" value="UniProtKB-SubCell"/>
</dbReference>
<dbReference type="GO" id="GO:0016442">
    <property type="term" value="C:RISC complex"/>
    <property type="evidence" value="ECO:0000250"/>
    <property type="project" value="UniProtKB"/>
</dbReference>
<dbReference type="GO" id="GO:0070578">
    <property type="term" value="C:RISC-loading complex"/>
    <property type="evidence" value="ECO:0000250"/>
    <property type="project" value="UniProtKB"/>
</dbReference>
<dbReference type="GO" id="GO:0070551">
    <property type="term" value="F:endoribonuclease activity, cleaving siRNA-paired mRNA"/>
    <property type="evidence" value="ECO:0000250"/>
    <property type="project" value="UniProtKB"/>
</dbReference>
<dbReference type="GO" id="GO:0046872">
    <property type="term" value="F:metal ion binding"/>
    <property type="evidence" value="ECO:0007669"/>
    <property type="project" value="UniProtKB-KW"/>
</dbReference>
<dbReference type="GO" id="GO:0035198">
    <property type="term" value="F:miRNA binding"/>
    <property type="evidence" value="ECO:0000318"/>
    <property type="project" value="GO_Central"/>
</dbReference>
<dbReference type="GO" id="GO:0098808">
    <property type="term" value="F:mRNA cap binding"/>
    <property type="evidence" value="ECO:0000250"/>
    <property type="project" value="UniProtKB"/>
</dbReference>
<dbReference type="GO" id="GO:0000340">
    <property type="term" value="F:RNA 7-methylguanosine cap binding"/>
    <property type="evidence" value="ECO:0000250"/>
    <property type="project" value="UniProtKB"/>
</dbReference>
<dbReference type="GO" id="GO:0004521">
    <property type="term" value="F:RNA endonuclease activity"/>
    <property type="evidence" value="ECO:0000318"/>
    <property type="project" value="GO_Central"/>
</dbReference>
<dbReference type="GO" id="GO:0003727">
    <property type="term" value="F:single-stranded RNA binding"/>
    <property type="evidence" value="ECO:0000318"/>
    <property type="project" value="GO_Central"/>
</dbReference>
<dbReference type="GO" id="GO:0035197">
    <property type="term" value="F:siRNA binding"/>
    <property type="evidence" value="ECO:0000250"/>
    <property type="project" value="UniProtKB"/>
</dbReference>
<dbReference type="GO" id="GO:0035278">
    <property type="term" value="P:miRNA-mediated gene silencing by inhibition of translation"/>
    <property type="evidence" value="ECO:0000250"/>
    <property type="project" value="UniProtKB"/>
</dbReference>
<dbReference type="GO" id="GO:0035279">
    <property type="term" value="P:miRNA-mediated gene silencing by mRNA destabilization"/>
    <property type="evidence" value="ECO:0000250"/>
    <property type="project" value="UniProtKB"/>
</dbReference>
<dbReference type="GO" id="GO:0045947">
    <property type="term" value="P:negative regulation of translational initiation"/>
    <property type="evidence" value="ECO:0000250"/>
    <property type="project" value="UniProtKB"/>
</dbReference>
<dbReference type="GO" id="GO:1900153">
    <property type="term" value="P:positive regulation of nuclear-transcribed mRNA catabolic process, deadenylation-dependent decay"/>
    <property type="evidence" value="ECO:0000250"/>
    <property type="project" value="UniProtKB"/>
</dbReference>
<dbReference type="GO" id="GO:0060213">
    <property type="term" value="P:positive regulation of nuclear-transcribed mRNA poly(A) tail shortening"/>
    <property type="evidence" value="ECO:0000250"/>
    <property type="project" value="UniProtKB"/>
</dbReference>
<dbReference type="GO" id="GO:0031054">
    <property type="term" value="P:pre-miRNA processing"/>
    <property type="evidence" value="ECO:0000250"/>
    <property type="project" value="UniProtKB"/>
</dbReference>
<dbReference type="GO" id="GO:0006355">
    <property type="term" value="P:regulation of DNA-templated transcription"/>
    <property type="evidence" value="ECO:0007669"/>
    <property type="project" value="InterPro"/>
</dbReference>
<dbReference type="GO" id="GO:0031047">
    <property type="term" value="P:regulatory ncRNA-mediated gene silencing"/>
    <property type="evidence" value="ECO:0000250"/>
    <property type="project" value="UniProtKB"/>
</dbReference>
<dbReference type="GO" id="GO:0035194">
    <property type="term" value="P:regulatory ncRNA-mediated post-transcriptional gene silencing"/>
    <property type="evidence" value="ECO:0000318"/>
    <property type="project" value="GO_Central"/>
</dbReference>
<dbReference type="CDD" id="cd02846">
    <property type="entry name" value="PAZ_argonaute_like"/>
    <property type="match status" value="1"/>
</dbReference>
<dbReference type="CDD" id="cd04657">
    <property type="entry name" value="Piwi_ago-like"/>
    <property type="match status" value="1"/>
</dbReference>
<dbReference type="FunFam" id="2.170.260.10:FF:000001">
    <property type="entry name" value="Protein argonaute-2"/>
    <property type="match status" value="1"/>
</dbReference>
<dbReference type="FunFam" id="3.30.420.10:FF:000001">
    <property type="entry name" value="Protein argonaute-2"/>
    <property type="match status" value="1"/>
</dbReference>
<dbReference type="FunFam" id="3.40.50.2300:FF:000005">
    <property type="entry name" value="Protein argonaute-2"/>
    <property type="match status" value="1"/>
</dbReference>
<dbReference type="Gene3D" id="3.40.50.2300">
    <property type="match status" value="1"/>
</dbReference>
<dbReference type="Gene3D" id="2.170.260.10">
    <property type="entry name" value="paz domain"/>
    <property type="match status" value="1"/>
</dbReference>
<dbReference type="Gene3D" id="3.30.420.10">
    <property type="entry name" value="Ribonuclease H-like superfamily/Ribonuclease H"/>
    <property type="match status" value="1"/>
</dbReference>
<dbReference type="HAMAP" id="MF_03031">
    <property type="entry name" value="AGO2"/>
    <property type="match status" value="1"/>
</dbReference>
<dbReference type="InterPro" id="IPR028602">
    <property type="entry name" value="AGO2"/>
</dbReference>
<dbReference type="InterPro" id="IPR014811">
    <property type="entry name" value="ArgoL1"/>
</dbReference>
<dbReference type="InterPro" id="IPR032472">
    <property type="entry name" value="ArgoL2"/>
</dbReference>
<dbReference type="InterPro" id="IPR032473">
    <property type="entry name" value="Argonaute_Mid_dom"/>
</dbReference>
<dbReference type="InterPro" id="IPR032474">
    <property type="entry name" value="Argonaute_N"/>
</dbReference>
<dbReference type="InterPro" id="IPR003100">
    <property type="entry name" value="PAZ_dom"/>
</dbReference>
<dbReference type="InterPro" id="IPR036085">
    <property type="entry name" value="PAZ_dom_sf"/>
</dbReference>
<dbReference type="InterPro" id="IPR003165">
    <property type="entry name" value="Piwi"/>
</dbReference>
<dbReference type="InterPro" id="IPR045246">
    <property type="entry name" value="Piwi_ago-like"/>
</dbReference>
<dbReference type="InterPro" id="IPR012337">
    <property type="entry name" value="RNaseH-like_sf"/>
</dbReference>
<dbReference type="InterPro" id="IPR036397">
    <property type="entry name" value="RNaseH_sf"/>
</dbReference>
<dbReference type="PANTHER" id="PTHR22891">
    <property type="entry name" value="EUKARYOTIC TRANSLATION INITIATION FACTOR 2C"/>
    <property type="match status" value="1"/>
</dbReference>
<dbReference type="Pfam" id="PF08699">
    <property type="entry name" value="ArgoL1"/>
    <property type="match status" value="1"/>
</dbReference>
<dbReference type="Pfam" id="PF16488">
    <property type="entry name" value="ArgoL2"/>
    <property type="match status" value="1"/>
</dbReference>
<dbReference type="Pfam" id="PF16487">
    <property type="entry name" value="ArgoMid"/>
    <property type="match status" value="1"/>
</dbReference>
<dbReference type="Pfam" id="PF16486">
    <property type="entry name" value="ArgoN"/>
    <property type="match status" value="1"/>
</dbReference>
<dbReference type="Pfam" id="PF02170">
    <property type="entry name" value="PAZ"/>
    <property type="match status" value="1"/>
</dbReference>
<dbReference type="Pfam" id="PF02171">
    <property type="entry name" value="Piwi"/>
    <property type="match status" value="1"/>
</dbReference>
<dbReference type="SMART" id="SM01163">
    <property type="entry name" value="DUF1785"/>
    <property type="match status" value="1"/>
</dbReference>
<dbReference type="SMART" id="SM00949">
    <property type="entry name" value="PAZ"/>
    <property type="match status" value="1"/>
</dbReference>
<dbReference type="SMART" id="SM00950">
    <property type="entry name" value="Piwi"/>
    <property type="match status" value="1"/>
</dbReference>
<dbReference type="SUPFAM" id="SSF101690">
    <property type="entry name" value="PAZ domain"/>
    <property type="match status" value="1"/>
</dbReference>
<dbReference type="SUPFAM" id="SSF53098">
    <property type="entry name" value="Ribonuclease H-like"/>
    <property type="match status" value="1"/>
</dbReference>
<dbReference type="PROSITE" id="PS50821">
    <property type="entry name" value="PAZ"/>
    <property type="match status" value="1"/>
</dbReference>
<dbReference type="PROSITE" id="PS50822">
    <property type="entry name" value="PIWI"/>
    <property type="match status" value="1"/>
</dbReference>
<gene>
    <name type="primary">ago2</name>
    <name type="synonym">eif2c2</name>
</gene>
<organism>
    <name type="scientific">Xenopus laevis</name>
    <name type="common">African clawed frog</name>
    <dbReference type="NCBI Taxonomy" id="8355"/>
    <lineage>
        <taxon>Eukaryota</taxon>
        <taxon>Metazoa</taxon>
        <taxon>Chordata</taxon>
        <taxon>Craniata</taxon>
        <taxon>Vertebrata</taxon>
        <taxon>Euteleostomi</taxon>
        <taxon>Amphibia</taxon>
        <taxon>Batrachia</taxon>
        <taxon>Anura</taxon>
        <taxon>Pipoidea</taxon>
        <taxon>Pipidae</taxon>
        <taxon>Xenopodinae</taxon>
        <taxon>Xenopus</taxon>
        <taxon>Xenopus</taxon>
    </lineage>
</organism>
<keyword id="KW-0963">Cytoplasm</keyword>
<keyword id="KW-0255">Endonuclease</keyword>
<keyword id="KW-0378">Hydrolase</keyword>
<keyword id="KW-0460">Magnesium</keyword>
<keyword id="KW-0464">Manganese</keyword>
<keyword id="KW-0479">Metal-binding</keyword>
<keyword id="KW-0540">Nuclease</keyword>
<keyword id="KW-1185">Reference proteome</keyword>
<keyword id="KW-0687">Ribonucleoprotein</keyword>
<keyword id="KW-0694">RNA-binding</keyword>
<keyword id="KW-0943">RNA-mediated gene silencing</keyword>
<keyword id="KW-0810">Translation regulation</keyword>
<feature type="chain" id="PRO_0000371220" description="Protein argonaute-2">
    <location>
        <begin position="1"/>
        <end position="862"/>
    </location>
</feature>
<feature type="domain" description="PAZ" evidence="4">
    <location>
        <begin position="232"/>
        <end position="351"/>
    </location>
</feature>
<feature type="domain" description="Piwi" evidence="3">
    <location>
        <begin position="520"/>
        <end position="821"/>
    </location>
</feature>
<feature type="region of interest" description="Interaction with guide RNA" evidence="1">
    <location>
        <begin position="314"/>
        <end position="319"/>
    </location>
</feature>
<feature type="region of interest" description="Interaction with guide RNA" evidence="1">
    <location>
        <begin position="527"/>
        <end position="569"/>
    </location>
</feature>
<feature type="region of interest" description="Interaction with GW182 family members" evidence="2">
    <location>
        <begin position="590"/>
        <end position="593"/>
    </location>
</feature>
<feature type="region of interest" description="Interaction with GW182 family members" evidence="2">
    <location>
        <begin position="653"/>
        <end position="663"/>
    </location>
</feature>
<feature type="region of interest" description="Interaction with guide RNA" evidence="1">
    <location>
        <begin position="712"/>
        <end position="713"/>
    </location>
</feature>
<feature type="region of interest" description="Interaction with guide RNA" evidence="1">
    <location>
        <begin position="756"/>
        <end position="764"/>
    </location>
</feature>
<feature type="region of interest" description="Interaction with guide RNA" evidence="1">
    <location>
        <begin position="793"/>
        <end position="815"/>
    </location>
</feature>
<feature type="region of interest" description="Disordered" evidence="5">
    <location>
        <begin position="825"/>
        <end position="847"/>
    </location>
</feature>
<feature type="compositionally biased region" description="Polar residues" evidence="5">
    <location>
        <begin position="830"/>
        <end position="841"/>
    </location>
</feature>
<feature type="binding site" evidence="3">
    <location>
        <position position="600"/>
    </location>
    <ligand>
        <name>a divalent metal cation</name>
        <dbReference type="ChEBI" id="CHEBI:60240"/>
    </ligand>
</feature>
<feature type="binding site" evidence="3">
    <location>
        <position position="672"/>
    </location>
    <ligand>
        <name>a divalent metal cation</name>
        <dbReference type="ChEBI" id="CHEBI:60240"/>
    </ligand>
</feature>
<feature type="binding site" evidence="3">
    <location>
        <position position="810"/>
    </location>
    <ligand>
        <name>a divalent metal cation</name>
        <dbReference type="ChEBI" id="CHEBI:60240"/>
    </ligand>
</feature>